<protein>
    <recommendedName>
        <fullName evidence="1">Imidazoleglycerol-phosphate dehydratase</fullName>
        <shortName evidence="1">IGPD</shortName>
        <ecNumber evidence="1">4.2.1.19</ecNumber>
    </recommendedName>
</protein>
<dbReference type="EC" id="4.2.1.19" evidence="1"/>
<dbReference type="EMBL" id="CP001404">
    <property type="protein sequence ID" value="ACP48390.1"/>
    <property type="molecule type" value="Genomic_DNA"/>
</dbReference>
<dbReference type="SMR" id="C3NGY0"/>
<dbReference type="GeneID" id="7810080"/>
<dbReference type="KEGG" id="sin:YN1551_1295"/>
<dbReference type="HOGENOM" id="CLU_044308_3_0_2"/>
<dbReference type="UniPathway" id="UPA00031">
    <property type="reaction ID" value="UER00011"/>
</dbReference>
<dbReference type="Proteomes" id="UP000006818">
    <property type="component" value="Chromosome"/>
</dbReference>
<dbReference type="GO" id="GO:0005737">
    <property type="term" value="C:cytoplasm"/>
    <property type="evidence" value="ECO:0007669"/>
    <property type="project" value="UniProtKB-SubCell"/>
</dbReference>
<dbReference type="GO" id="GO:0004424">
    <property type="term" value="F:imidazoleglycerol-phosphate dehydratase activity"/>
    <property type="evidence" value="ECO:0007669"/>
    <property type="project" value="UniProtKB-UniRule"/>
</dbReference>
<dbReference type="GO" id="GO:0000105">
    <property type="term" value="P:L-histidine biosynthetic process"/>
    <property type="evidence" value="ECO:0007669"/>
    <property type="project" value="UniProtKB-UniRule"/>
</dbReference>
<dbReference type="CDD" id="cd07914">
    <property type="entry name" value="IGPD"/>
    <property type="match status" value="1"/>
</dbReference>
<dbReference type="FunFam" id="3.30.230.40:FF:000001">
    <property type="entry name" value="Imidazoleglycerol-phosphate dehydratase HisB"/>
    <property type="match status" value="1"/>
</dbReference>
<dbReference type="FunFam" id="3.30.230.40:FF:000003">
    <property type="entry name" value="Imidazoleglycerol-phosphate dehydratase HisB"/>
    <property type="match status" value="1"/>
</dbReference>
<dbReference type="Gene3D" id="3.30.230.40">
    <property type="entry name" value="Imidazole glycerol phosphate dehydratase, domain 1"/>
    <property type="match status" value="2"/>
</dbReference>
<dbReference type="HAMAP" id="MF_00076">
    <property type="entry name" value="HisB"/>
    <property type="match status" value="1"/>
</dbReference>
<dbReference type="InterPro" id="IPR038494">
    <property type="entry name" value="IGPD_sf"/>
</dbReference>
<dbReference type="InterPro" id="IPR000807">
    <property type="entry name" value="ImidazoleglycerolP_deHydtase"/>
</dbReference>
<dbReference type="InterPro" id="IPR020565">
    <property type="entry name" value="ImidazoleglycerP_deHydtase_CS"/>
</dbReference>
<dbReference type="InterPro" id="IPR020568">
    <property type="entry name" value="Ribosomal_Su5_D2-typ_SF"/>
</dbReference>
<dbReference type="NCBIfam" id="NF002114">
    <property type="entry name" value="PRK00951.2-4"/>
    <property type="match status" value="1"/>
</dbReference>
<dbReference type="NCBIfam" id="NF010121">
    <property type="entry name" value="PRK13598.1"/>
    <property type="match status" value="1"/>
</dbReference>
<dbReference type="PANTHER" id="PTHR23133:SF2">
    <property type="entry name" value="IMIDAZOLEGLYCEROL-PHOSPHATE DEHYDRATASE"/>
    <property type="match status" value="1"/>
</dbReference>
<dbReference type="PANTHER" id="PTHR23133">
    <property type="entry name" value="IMIDAZOLEGLYCEROL-PHOSPHATE DEHYDRATASE HIS7"/>
    <property type="match status" value="1"/>
</dbReference>
<dbReference type="Pfam" id="PF00475">
    <property type="entry name" value="IGPD"/>
    <property type="match status" value="1"/>
</dbReference>
<dbReference type="SUPFAM" id="SSF54211">
    <property type="entry name" value="Ribosomal protein S5 domain 2-like"/>
    <property type="match status" value="2"/>
</dbReference>
<dbReference type="PROSITE" id="PS00954">
    <property type="entry name" value="IGP_DEHYDRATASE_1"/>
    <property type="match status" value="1"/>
</dbReference>
<dbReference type="PROSITE" id="PS00955">
    <property type="entry name" value="IGP_DEHYDRATASE_2"/>
    <property type="match status" value="1"/>
</dbReference>
<feature type="chain" id="PRO_1000202522" description="Imidazoleglycerol-phosphate dehydratase">
    <location>
        <begin position="1"/>
        <end position="193"/>
    </location>
</feature>
<organism>
    <name type="scientific">Saccharolobus islandicus (strain Y.N.15.51 / Yellowstone #2)</name>
    <name type="common">Sulfolobus islandicus</name>
    <dbReference type="NCBI Taxonomy" id="419942"/>
    <lineage>
        <taxon>Archaea</taxon>
        <taxon>Thermoproteota</taxon>
        <taxon>Thermoprotei</taxon>
        <taxon>Sulfolobales</taxon>
        <taxon>Sulfolobaceae</taxon>
        <taxon>Saccharolobus</taxon>
    </lineage>
</organism>
<gene>
    <name evidence="1" type="primary">hisB</name>
    <name type="ordered locus">YN1551_1295</name>
</gene>
<name>HIS7_SACI1</name>
<proteinExistence type="inferred from homology"/>
<comment type="catalytic activity">
    <reaction evidence="1">
        <text>D-erythro-1-(imidazol-4-yl)glycerol 3-phosphate = 3-(imidazol-4-yl)-2-oxopropyl phosphate + H2O</text>
        <dbReference type="Rhea" id="RHEA:11040"/>
        <dbReference type="ChEBI" id="CHEBI:15377"/>
        <dbReference type="ChEBI" id="CHEBI:57766"/>
        <dbReference type="ChEBI" id="CHEBI:58278"/>
        <dbReference type="EC" id="4.2.1.19"/>
    </reaction>
</comment>
<comment type="pathway">
    <text evidence="1">Amino-acid biosynthesis; L-histidine biosynthesis; L-histidine from 5-phospho-alpha-D-ribose 1-diphosphate: step 6/9.</text>
</comment>
<comment type="subcellular location">
    <subcellularLocation>
        <location evidence="1">Cytoplasm</location>
    </subcellularLocation>
</comment>
<comment type="similarity">
    <text evidence="1">Belongs to the imidazoleglycerol-phosphate dehydratase family.</text>
</comment>
<keyword id="KW-0028">Amino-acid biosynthesis</keyword>
<keyword id="KW-0963">Cytoplasm</keyword>
<keyword id="KW-0368">Histidine biosynthesis</keyword>
<keyword id="KW-0456">Lyase</keyword>
<reference key="1">
    <citation type="journal article" date="2009" name="Proc. Natl. Acad. Sci. U.S.A.">
        <title>Biogeography of the Sulfolobus islandicus pan-genome.</title>
        <authorList>
            <person name="Reno M.L."/>
            <person name="Held N.L."/>
            <person name="Fields C.J."/>
            <person name="Burke P.V."/>
            <person name="Whitaker R.J."/>
        </authorList>
    </citation>
    <scope>NUCLEOTIDE SEQUENCE [LARGE SCALE GENOMIC DNA]</scope>
    <source>
        <strain>Y.N.15.51 / Yellowstone #2</strain>
    </source>
</reference>
<evidence type="ECO:0000255" key="1">
    <source>
        <dbReference type="HAMAP-Rule" id="MF_00076"/>
    </source>
</evidence>
<sequence>MARNANITRETKETKIEVFLDIDRKGEIKVSTPVPFFNHMLITLLTYMNSTATVSATDKLPYDDHHIIEDVAITLGLAIKEALGDKRGIKRFSHQIIPMDEALVLVSLDISNRGMAFVSLNLKRSEIGGLATENIPHFFQSFAYNSGVTLHISQLSGYNTHHIIEASFKALGLALYEATRIVDNEIRSTKGVI</sequence>
<accession>C3NGY0</accession>